<evidence type="ECO:0000255" key="1">
    <source>
        <dbReference type="HAMAP-Rule" id="MF_01371"/>
    </source>
</evidence>
<evidence type="ECO:0000305" key="2"/>
<comment type="subunit">
    <text evidence="1">Part of the 50S ribosomal subunit.</text>
</comment>
<comment type="similarity">
    <text evidence="1">Belongs to the universal ribosomal protein uL30 family.</text>
</comment>
<organism>
    <name type="scientific">Methanocaldococcus jannaschii (strain ATCC 43067 / DSM 2661 / JAL-1 / JCM 10045 / NBRC 100440)</name>
    <name type="common">Methanococcus jannaschii</name>
    <dbReference type="NCBI Taxonomy" id="243232"/>
    <lineage>
        <taxon>Archaea</taxon>
        <taxon>Methanobacteriati</taxon>
        <taxon>Methanobacteriota</taxon>
        <taxon>Methanomada group</taxon>
        <taxon>Methanococci</taxon>
        <taxon>Methanococcales</taxon>
        <taxon>Methanocaldococcaceae</taxon>
        <taxon>Methanocaldococcus</taxon>
    </lineage>
</organism>
<name>RL30_METJA</name>
<keyword id="KW-1185">Reference proteome</keyword>
<keyword id="KW-0687">Ribonucleoprotein</keyword>
<keyword id="KW-0689">Ribosomal protein</keyword>
<reference key="1">
    <citation type="journal article" date="1996" name="Science">
        <title>Complete genome sequence of the methanogenic archaeon, Methanococcus jannaschii.</title>
        <authorList>
            <person name="Bult C.J."/>
            <person name="White O."/>
            <person name="Olsen G.J."/>
            <person name="Zhou L."/>
            <person name="Fleischmann R.D."/>
            <person name="Sutton G.G."/>
            <person name="Blake J.A."/>
            <person name="FitzGerald L.M."/>
            <person name="Clayton R.A."/>
            <person name="Gocayne J.D."/>
            <person name="Kerlavage A.R."/>
            <person name="Dougherty B.A."/>
            <person name="Tomb J.-F."/>
            <person name="Adams M.D."/>
            <person name="Reich C.I."/>
            <person name="Overbeek R."/>
            <person name="Kirkness E.F."/>
            <person name="Weinstock K.G."/>
            <person name="Merrick J.M."/>
            <person name="Glodek A."/>
            <person name="Scott J.L."/>
            <person name="Geoghagen N.S.M."/>
            <person name="Weidman J.F."/>
            <person name="Fuhrmann J.L."/>
            <person name="Nguyen D."/>
            <person name="Utterback T.R."/>
            <person name="Kelley J.M."/>
            <person name="Peterson J.D."/>
            <person name="Sadow P.W."/>
            <person name="Hanna M.C."/>
            <person name="Cotton M.D."/>
            <person name="Roberts K.M."/>
            <person name="Hurst M.A."/>
            <person name="Kaine B.P."/>
            <person name="Borodovsky M."/>
            <person name="Klenk H.-P."/>
            <person name="Fraser C.M."/>
            <person name="Smith H.O."/>
            <person name="Woese C.R."/>
            <person name="Venter J.C."/>
        </authorList>
    </citation>
    <scope>NUCLEOTIDE SEQUENCE [LARGE SCALE GENOMIC DNA]</scope>
    <source>
        <strain>ATCC 43067 / DSM 2661 / JAL-1 / JCM 10045 / NBRC 100440</strain>
    </source>
</reference>
<protein>
    <recommendedName>
        <fullName evidence="1">Large ribosomal subunit protein uL30</fullName>
    </recommendedName>
    <alternativeName>
        <fullName evidence="2">50S ribosomal protein L30</fullName>
    </alternativeName>
</protein>
<proteinExistence type="inferred from homology"/>
<gene>
    <name evidence="1" type="primary">rpl30</name>
    <name type="ordered locus">MJ0476</name>
</gene>
<sequence>MAYAVIRIRGRVGVRRDIADTLKMLRLHKVNHCVIIPETETFKGMLQKVKDYVTWGEIDKDTLVKLILKRGRLPGNKKVNPEIIKELTGMDVEELAEKIINGEIKLKETPLKPVFRLHPPRKGFERGGIKKPFSVGGALGYRGEKINELLEKMM</sequence>
<accession>P54046</accession>
<dbReference type="EMBL" id="L77117">
    <property type="protein sequence ID" value="AAB98465.1"/>
    <property type="molecule type" value="Genomic_DNA"/>
</dbReference>
<dbReference type="PIR" id="D64359">
    <property type="entry name" value="D64359"/>
</dbReference>
<dbReference type="RefSeq" id="WP_010869977.1">
    <property type="nucleotide sequence ID" value="NC_000909.1"/>
</dbReference>
<dbReference type="SMR" id="P54046"/>
<dbReference type="FunCoup" id="P54046">
    <property type="interactions" value="156"/>
</dbReference>
<dbReference type="STRING" id="243232.MJ_0476"/>
<dbReference type="PaxDb" id="243232-MJ_0476"/>
<dbReference type="EnsemblBacteria" id="AAB98465">
    <property type="protein sequence ID" value="AAB98465"/>
    <property type="gene ID" value="MJ_0476"/>
</dbReference>
<dbReference type="GeneID" id="1451338"/>
<dbReference type="KEGG" id="mja:MJ_0476"/>
<dbReference type="eggNOG" id="arCOG04086">
    <property type="taxonomic scope" value="Archaea"/>
</dbReference>
<dbReference type="HOGENOM" id="CLU_055156_6_0_2"/>
<dbReference type="InParanoid" id="P54046"/>
<dbReference type="OrthoDB" id="6379at2157"/>
<dbReference type="PhylomeDB" id="P54046"/>
<dbReference type="Proteomes" id="UP000000805">
    <property type="component" value="Chromosome"/>
</dbReference>
<dbReference type="GO" id="GO:0022625">
    <property type="term" value="C:cytosolic large ribosomal subunit"/>
    <property type="evidence" value="ECO:0000318"/>
    <property type="project" value="GO_Central"/>
</dbReference>
<dbReference type="GO" id="GO:0003723">
    <property type="term" value="F:RNA binding"/>
    <property type="evidence" value="ECO:0000318"/>
    <property type="project" value="GO_Central"/>
</dbReference>
<dbReference type="GO" id="GO:0003735">
    <property type="term" value="F:structural constituent of ribosome"/>
    <property type="evidence" value="ECO:0000318"/>
    <property type="project" value="GO_Central"/>
</dbReference>
<dbReference type="GO" id="GO:0000463">
    <property type="term" value="P:maturation of LSU-rRNA from tricistronic rRNA transcript (SSU-rRNA, 5.8S rRNA, LSU-rRNA)"/>
    <property type="evidence" value="ECO:0000318"/>
    <property type="project" value="GO_Central"/>
</dbReference>
<dbReference type="GO" id="GO:0006412">
    <property type="term" value="P:translation"/>
    <property type="evidence" value="ECO:0007669"/>
    <property type="project" value="UniProtKB-UniRule"/>
</dbReference>
<dbReference type="CDD" id="cd01657">
    <property type="entry name" value="Ribosomal_L7_archeal_euk"/>
    <property type="match status" value="1"/>
</dbReference>
<dbReference type="FunFam" id="1.10.15.30:FF:000002">
    <property type="entry name" value="50S ribosomal protein L30"/>
    <property type="match status" value="1"/>
</dbReference>
<dbReference type="Gene3D" id="1.10.15.30">
    <property type="match status" value="1"/>
</dbReference>
<dbReference type="Gene3D" id="3.30.1390.20">
    <property type="entry name" value="Ribosomal protein L30, ferredoxin-like fold domain"/>
    <property type="match status" value="1"/>
</dbReference>
<dbReference type="HAMAP" id="MF_01371_A">
    <property type="entry name" value="Ribosomal_uL30_A"/>
    <property type="match status" value="1"/>
</dbReference>
<dbReference type="InterPro" id="IPR036919">
    <property type="entry name" value="Ribo_uL30_ferredoxin-like_sf"/>
</dbReference>
<dbReference type="InterPro" id="IPR039699">
    <property type="entry name" value="Ribosomal_uL30"/>
</dbReference>
<dbReference type="InterPro" id="IPR005997">
    <property type="entry name" value="Ribosomal_uL30_arc"/>
</dbReference>
<dbReference type="InterPro" id="IPR018038">
    <property type="entry name" value="Ribosomal_uL30_CS"/>
</dbReference>
<dbReference type="InterPro" id="IPR035808">
    <property type="entry name" value="Ribosomal_uL30_euk_arc"/>
</dbReference>
<dbReference type="InterPro" id="IPR016082">
    <property type="entry name" value="Ribosomal_uL30_ferredoxin-like"/>
</dbReference>
<dbReference type="NCBIfam" id="NF004711">
    <property type="entry name" value="PRK06049.1"/>
    <property type="match status" value="1"/>
</dbReference>
<dbReference type="NCBIfam" id="TIGR01309">
    <property type="entry name" value="uL30_arch"/>
    <property type="match status" value="1"/>
</dbReference>
<dbReference type="PANTHER" id="PTHR11524">
    <property type="entry name" value="60S RIBOSOMAL PROTEIN L7"/>
    <property type="match status" value="1"/>
</dbReference>
<dbReference type="PANTHER" id="PTHR11524:SF16">
    <property type="entry name" value="LARGE RIBOSOMAL SUBUNIT PROTEIN UL30"/>
    <property type="match status" value="1"/>
</dbReference>
<dbReference type="Pfam" id="PF00327">
    <property type="entry name" value="Ribosomal_L30"/>
    <property type="match status" value="1"/>
</dbReference>
<dbReference type="SUPFAM" id="SSF55129">
    <property type="entry name" value="Ribosomal protein L30p/L7e"/>
    <property type="match status" value="1"/>
</dbReference>
<dbReference type="PROSITE" id="PS00634">
    <property type="entry name" value="RIBOSOMAL_L30"/>
    <property type="match status" value="1"/>
</dbReference>
<feature type="chain" id="PRO_0000104624" description="Large ribosomal subunit protein uL30">
    <location>
        <begin position="1"/>
        <end position="154"/>
    </location>
</feature>